<evidence type="ECO:0000255" key="1">
    <source>
        <dbReference type="HAMAP-Rule" id="MF_01576"/>
    </source>
</evidence>
<reference key="1">
    <citation type="submission" date="2002-12" db="EMBL/GenBank/DDBJ databases">
        <title>Complete genome sequence of Vibrio vulnificus CMCP6.</title>
        <authorList>
            <person name="Rhee J.H."/>
            <person name="Kim S.Y."/>
            <person name="Chung S.S."/>
            <person name="Kim J.J."/>
            <person name="Moon Y.H."/>
            <person name="Jeong H."/>
            <person name="Choy H.E."/>
        </authorList>
    </citation>
    <scope>NUCLEOTIDE SEQUENCE [LARGE SCALE GENOMIC DNA]</scope>
    <source>
        <strain>CMCP6</strain>
    </source>
</reference>
<feature type="chain" id="PRO_0000268559" description="Bifunctional protein FolD">
    <location>
        <begin position="1"/>
        <end position="285"/>
    </location>
</feature>
<feature type="binding site" evidence="1">
    <location>
        <begin position="166"/>
        <end position="168"/>
    </location>
    <ligand>
        <name>NADP(+)</name>
        <dbReference type="ChEBI" id="CHEBI:58349"/>
    </ligand>
</feature>
<feature type="binding site" evidence="1">
    <location>
        <position position="232"/>
    </location>
    <ligand>
        <name>NADP(+)</name>
        <dbReference type="ChEBI" id="CHEBI:58349"/>
    </ligand>
</feature>
<proteinExistence type="inferred from homology"/>
<name>FOLD_VIBVU</name>
<keyword id="KW-0028">Amino-acid biosynthesis</keyword>
<keyword id="KW-0368">Histidine biosynthesis</keyword>
<keyword id="KW-0378">Hydrolase</keyword>
<keyword id="KW-0486">Methionine biosynthesis</keyword>
<keyword id="KW-0511">Multifunctional enzyme</keyword>
<keyword id="KW-0521">NADP</keyword>
<keyword id="KW-0554">One-carbon metabolism</keyword>
<keyword id="KW-0560">Oxidoreductase</keyword>
<keyword id="KW-0658">Purine biosynthesis</keyword>
<organism>
    <name type="scientific">Vibrio vulnificus (strain CMCP6)</name>
    <dbReference type="NCBI Taxonomy" id="216895"/>
    <lineage>
        <taxon>Bacteria</taxon>
        <taxon>Pseudomonadati</taxon>
        <taxon>Pseudomonadota</taxon>
        <taxon>Gammaproteobacteria</taxon>
        <taxon>Vibrionales</taxon>
        <taxon>Vibrionaceae</taxon>
        <taxon>Vibrio</taxon>
    </lineage>
</organism>
<protein>
    <recommendedName>
        <fullName evidence="1">Bifunctional protein FolD</fullName>
    </recommendedName>
    <domain>
        <recommendedName>
            <fullName evidence="1">Methylenetetrahydrofolate dehydrogenase</fullName>
            <ecNumber evidence="1">1.5.1.5</ecNumber>
        </recommendedName>
    </domain>
    <domain>
        <recommendedName>
            <fullName evidence="1">Methenyltetrahydrofolate cyclohydrolase</fullName>
            <ecNumber evidence="1">3.5.4.9</ecNumber>
        </recommendedName>
    </domain>
</protein>
<gene>
    <name evidence="1" type="primary">folD</name>
    <name type="ordered locus">VV1_2022</name>
</gene>
<sequence>MTAQNIDGTLISQTVRSEVAARVKARVAAGLRAPGLAVVLVGEDPASQVYVGSKRRACEEVGFVSKSFDLPASTSEEELLALIDELNNDAEIDGILVQLPLPAGIDSTHVLESIHPEKDVDGFHPYNVGRLAQRIPKLRSCTPKGIITLLERYNIALRGKHAVIVGASNIVGRPMTLELLLAGCTTTTCHRFTKDLEGHVRQADVLVVAVGKPNFIPGEWVKEGAIVVDVGINRLESGKLIGDVEYNKARERASFITPVPGGVGPMTVASLIENTMLACEQYHTK</sequence>
<dbReference type="EC" id="1.5.1.5" evidence="1"/>
<dbReference type="EC" id="3.5.4.9" evidence="1"/>
<dbReference type="EMBL" id="AE016795">
    <property type="protein sequence ID" value="AAO10418.1"/>
    <property type="molecule type" value="Genomic_DNA"/>
</dbReference>
<dbReference type="RefSeq" id="WP_011079917.1">
    <property type="nucleotide sequence ID" value="NC_004459.3"/>
</dbReference>
<dbReference type="SMR" id="Q8DB06"/>
<dbReference type="GeneID" id="93896242"/>
<dbReference type="KEGG" id="vvu:VV1_2022"/>
<dbReference type="HOGENOM" id="CLU_034045_2_1_6"/>
<dbReference type="UniPathway" id="UPA00193"/>
<dbReference type="Proteomes" id="UP000002275">
    <property type="component" value="Chromosome 1"/>
</dbReference>
<dbReference type="GO" id="GO:0005829">
    <property type="term" value="C:cytosol"/>
    <property type="evidence" value="ECO:0007669"/>
    <property type="project" value="TreeGrafter"/>
</dbReference>
<dbReference type="GO" id="GO:0004477">
    <property type="term" value="F:methenyltetrahydrofolate cyclohydrolase activity"/>
    <property type="evidence" value="ECO:0007669"/>
    <property type="project" value="UniProtKB-UniRule"/>
</dbReference>
<dbReference type="GO" id="GO:0004488">
    <property type="term" value="F:methylenetetrahydrofolate dehydrogenase (NADP+) activity"/>
    <property type="evidence" value="ECO:0007669"/>
    <property type="project" value="UniProtKB-UniRule"/>
</dbReference>
<dbReference type="GO" id="GO:0000105">
    <property type="term" value="P:L-histidine biosynthetic process"/>
    <property type="evidence" value="ECO:0007669"/>
    <property type="project" value="UniProtKB-KW"/>
</dbReference>
<dbReference type="GO" id="GO:0009086">
    <property type="term" value="P:methionine biosynthetic process"/>
    <property type="evidence" value="ECO:0007669"/>
    <property type="project" value="UniProtKB-KW"/>
</dbReference>
<dbReference type="GO" id="GO:0006164">
    <property type="term" value="P:purine nucleotide biosynthetic process"/>
    <property type="evidence" value="ECO:0007669"/>
    <property type="project" value="UniProtKB-KW"/>
</dbReference>
<dbReference type="GO" id="GO:0035999">
    <property type="term" value="P:tetrahydrofolate interconversion"/>
    <property type="evidence" value="ECO:0007669"/>
    <property type="project" value="UniProtKB-UniRule"/>
</dbReference>
<dbReference type="CDD" id="cd01080">
    <property type="entry name" value="NAD_bind_m-THF_DH_Cyclohyd"/>
    <property type="match status" value="1"/>
</dbReference>
<dbReference type="FunFam" id="3.40.50.10860:FF:000001">
    <property type="entry name" value="Bifunctional protein FolD"/>
    <property type="match status" value="1"/>
</dbReference>
<dbReference type="FunFam" id="3.40.50.720:FF:000006">
    <property type="entry name" value="Bifunctional protein FolD"/>
    <property type="match status" value="1"/>
</dbReference>
<dbReference type="Gene3D" id="3.40.50.10860">
    <property type="entry name" value="Leucine Dehydrogenase, chain A, domain 1"/>
    <property type="match status" value="1"/>
</dbReference>
<dbReference type="Gene3D" id="3.40.50.720">
    <property type="entry name" value="NAD(P)-binding Rossmann-like Domain"/>
    <property type="match status" value="1"/>
</dbReference>
<dbReference type="HAMAP" id="MF_01576">
    <property type="entry name" value="THF_DHG_CYH"/>
    <property type="match status" value="1"/>
</dbReference>
<dbReference type="InterPro" id="IPR046346">
    <property type="entry name" value="Aminoacid_DH-like_N_sf"/>
</dbReference>
<dbReference type="InterPro" id="IPR036291">
    <property type="entry name" value="NAD(P)-bd_dom_sf"/>
</dbReference>
<dbReference type="InterPro" id="IPR000672">
    <property type="entry name" value="THF_DH/CycHdrlase"/>
</dbReference>
<dbReference type="InterPro" id="IPR020630">
    <property type="entry name" value="THF_DH/CycHdrlase_cat_dom"/>
</dbReference>
<dbReference type="InterPro" id="IPR020867">
    <property type="entry name" value="THF_DH/CycHdrlase_CS"/>
</dbReference>
<dbReference type="InterPro" id="IPR020631">
    <property type="entry name" value="THF_DH/CycHdrlase_NAD-bd_dom"/>
</dbReference>
<dbReference type="NCBIfam" id="NF008058">
    <property type="entry name" value="PRK10792.1"/>
    <property type="match status" value="1"/>
</dbReference>
<dbReference type="NCBIfam" id="NF010783">
    <property type="entry name" value="PRK14186.1"/>
    <property type="match status" value="1"/>
</dbReference>
<dbReference type="PANTHER" id="PTHR48099:SF5">
    <property type="entry name" value="C-1-TETRAHYDROFOLATE SYNTHASE, CYTOPLASMIC"/>
    <property type="match status" value="1"/>
</dbReference>
<dbReference type="PANTHER" id="PTHR48099">
    <property type="entry name" value="C-1-TETRAHYDROFOLATE SYNTHASE, CYTOPLASMIC-RELATED"/>
    <property type="match status" value="1"/>
</dbReference>
<dbReference type="Pfam" id="PF00763">
    <property type="entry name" value="THF_DHG_CYH"/>
    <property type="match status" value="1"/>
</dbReference>
<dbReference type="Pfam" id="PF02882">
    <property type="entry name" value="THF_DHG_CYH_C"/>
    <property type="match status" value="1"/>
</dbReference>
<dbReference type="PRINTS" id="PR00085">
    <property type="entry name" value="THFDHDRGNASE"/>
</dbReference>
<dbReference type="SUPFAM" id="SSF53223">
    <property type="entry name" value="Aminoacid dehydrogenase-like, N-terminal domain"/>
    <property type="match status" value="1"/>
</dbReference>
<dbReference type="SUPFAM" id="SSF51735">
    <property type="entry name" value="NAD(P)-binding Rossmann-fold domains"/>
    <property type="match status" value="1"/>
</dbReference>
<dbReference type="PROSITE" id="PS00766">
    <property type="entry name" value="THF_DHG_CYH_1"/>
    <property type="match status" value="1"/>
</dbReference>
<dbReference type="PROSITE" id="PS00767">
    <property type="entry name" value="THF_DHG_CYH_2"/>
    <property type="match status" value="1"/>
</dbReference>
<accession>Q8DB06</accession>
<comment type="function">
    <text evidence="1">Catalyzes the oxidation of 5,10-methylenetetrahydrofolate to 5,10-methenyltetrahydrofolate and then the hydrolysis of 5,10-methenyltetrahydrofolate to 10-formyltetrahydrofolate.</text>
</comment>
<comment type="catalytic activity">
    <reaction evidence="1">
        <text>(6R)-5,10-methylene-5,6,7,8-tetrahydrofolate + NADP(+) = (6R)-5,10-methenyltetrahydrofolate + NADPH</text>
        <dbReference type="Rhea" id="RHEA:22812"/>
        <dbReference type="ChEBI" id="CHEBI:15636"/>
        <dbReference type="ChEBI" id="CHEBI:57455"/>
        <dbReference type="ChEBI" id="CHEBI:57783"/>
        <dbReference type="ChEBI" id="CHEBI:58349"/>
        <dbReference type="EC" id="1.5.1.5"/>
    </reaction>
</comment>
<comment type="catalytic activity">
    <reaction evidence="1">
        <text>(6R)-5,10-methenyltetrahydrofolate + H2O = (6R)-10-formyltetrahydrofolate + H(+)</text>
        <dbReference type="Rhea" id="RHEA:23700"/>
        <dbReference type="ChEBI" id="CHEBI:15377"/>
        <dbReference type="ChEBI" id="CHEBI:15378"/>
        <dbReference type="ChEBI" id="CHEBI:57455"/>
        <dbReference type="ChEBI" id="CHEBI:195366"/>
        <dbReference type="EC" id="3.5.4.9"/>
    </reaction>
</comment>
<comment type="pathway">
    <text evidence="1">One-carbon metabolism; tetrahydrofolate interconversion.</text>
</comment>
<comment type="subunit">
    <text evidence="1">Homodimer.</text>
</comment>
<comment type="similarity">
    <text evidence="1">Belongs to the tetrahydrofolate dehydrogenase/cyclohydrolase family.</text>
</comment>